<sequence>METRREERIGQLLQELKRSDKLHLKDAAALLGVSEMTIRRDLNNHSAPVVLLGGYIVLEPRSASHYLLSDQKSRLVEEKRRAAKLAATLVEPDQTLFFDCGTTTPWIIEAIDNEIPFTAVCYSLNTFLALKEKPHCRAFLCGGEFHASNAIFKPIDFQQTLNNFCPDIAFYSAAGVHVSKGATCFNLEELPVKHWAMSMAQKHVLVVDHSKFGKVRPARMGDLKRFDIVVSDCCPEDEYVKYAQTQRIKLMY</sequence>
<dbReference type="EMBL" id="AE014075">
    <property type="protein sequence ID" value="AAN79398.1"/>
    <property type="molecule type" value="Genomic_DNA"/>
</dbReference>
<dbReference type="RefSeq" id="WP_000450121.1">
    <property type="nucleotide sequence ID" value="NZ_CP051263.1"/>
</dbReference>
<dbReference type="SMR" id="P0ACK6"/>
<dbReference type="STRING" id="199310.c0925"/>
<dbReference type="GeneID" id="75170909"/>
<dbReference type="KEGG" id="ecc:c0925"/>
<dbReference type="eggNOG" id="COG1349">
    <property type="taxonomic scope" value="Bacteria"/>
</dbReference>
<dbReference type="HOGENOM" id="CLU_060699_4_0_6"/>
<dbReference type="BioCyc" id="ECOL199310:C0925-MONOMER"/>
<dbReference type="Proteomes" id="UP000001410">
    <property type="component" value="Chromosome"/>
</dbReference>
<dbReference type="GO" id="GO:0003677">
    <property type="term" value="F:DNA binding"/>
    <property type="evidence" value="ECO:0007669"/>
    <property type="project" value="UniProtKB-KW"/>
</dbReference>
<dbReference type="GO" id="GO:0003700">
    <property type="term" value="F:DNA-binding transcription factor activity"/>
    <property type="evidence" value="ECO:0007669"/>
    <property type="project" value="InterPro"/>
</dbReference>
<dbReference type="FunFam" id="3.40.50.1360:FF:000011">
    <property type="entry name" value="Deoxyribose operon repressor"/>
    <property type="match status" value="1"/>
</dbReference>
<dbReference type="Gene3D" id="3.40.50.1360">
    <property type="match status" value="1"/>
</dbReference>
<dbReference type="InterPro" id="IPR050313">
    <property type="entry name" value="Carb_Metab_HTH_regulators"/>
</dbReference>
<dbReference type="InterPro" id="IPR014036">
    <property type="entry name" value="DeoR-like_C"/>
</dbReference>
<dbReference type="InterPro" id="IPR001034">
    <property type="entry name" value="DeoR_HTH"/>
</dbReference>
<dbReference type="InterPro" id="IPR037171">
    <property type="entry name" value="NagB/RpiA_transferase-like"/>
</dbReference>
<dbReference type="InterPro" id="IPR018356">
    <property type="entry name" value="Tscrpt_reg_HTH_DeoR_CS"/>
</dbReference>
<dbReference type="NCBIfam" id="NF007961">
    <property type="entry name" value="PRK10681.1"/>
    <property type="match status" value="1"/>
</dbReference>
<dbReference type="PANTHER" id="PTHR30363:SF8">
    <property type="entry name" value="DEOXYRIBOSE OPERON REPRESSOR"/>
    <property type="match status" value="1"/>
</dbReference>
<dbReference type="PANTHER" id="PTHR30363">
    <property type="entry name" value="HTH-TYPE TRANSCRIPTIONAL REGULATOR SRLR-RELATED"/>
    <property type="match status" value="1"/>
</dbReference>
<dbReference type="Pfam" id="PF00455">
    <property type="entry name" value="DeoRC"/>
    <property type="match status" value="1"/>
</dbReference>
<dbReference type="Pfam" id="PF08220">
    <property type="entry name" value="HTH_DeoR"/>
    <property type="match status" value="1"/>
</dbReference>
<dbReference type="SMART" id="SM01134">
    <property type="entry name" value="DeoRC"/>
    <property type="match status" value="1"/>
</dbReference>
<dbReference type="SMART" id="SM00420">
    <property type="entry name" value="HTH_DEOR"/>
    <property type="match status" value="1"/>
</dbReference>
<dbReference type="SUPFAM" id="SSF100950">
    <property type="entry name" value="NagB/RpiA/CoA transferase-like"/>
    <property type="match status" value="1"/>
</dbReference>
<dbReference type="PROSITE" id="PS00894">
    <property type="entry name" value="HTH_DEOR_1"/>
    <property type="match status" value="1"/>
</dbReference>
<dbReference type="PROSITE" id="PS51000">
    <property type="entry name" value="HTH_DEOR_2"/>
    <property type="match status" value="1"/>
</dbReference>
<protein>
    <recommendedName>
        <fullName>Deoxyribose operon repressor</fullName>
    </recommendedName>
</protein>
<evidence type="ECO:0000250" key="1"/>
<evidence type="ECO:0000255" key="2">
    <source>
        <dbReference type="PROSITE-ProRule" id="PRU00349"/>
    </source>
</evidence>
<feature type="chain" id="PRO_0000050246" description="Deoxyribose operon repressor">
    <location>
        <begin position="1"/>
        <end position="252"/>
    </location>
</feature>
<feature type="domain" description="HTH deoR-type" evidence="2">
    <location>
        <begin position="5"/>
        <end position="57"/>
    </location>
</feature>
<feature type="DNA-binding region" description="H-T-H motif" evidence="2">
    <location>
        <begin position="22"/>
        <end position="41"/>
    </location>
</feature>
<organism>
    <name type="scientific">Escherichia coli O6:H1 (strain CFT073 / ATCC 700928 / UPEC)</name>
    <dbReference type="NCBI Taxonomy" id="199310"/>
    <lineage>
        <taxon>Bacteria</taxon>
        <taxon>Pseudomonadati</taxon>
        <taxon>Pseudomonadota</taxon>
        <taxon>Gammaproteobacteria</taxon>
        <taxon>Enterobacterales</taxon>
        <taxon>Enterobacteriaceae</taxon>
        <taxon>Escherichia</taxon>
    </lineage>
</organism>
<accession>P0ACK6</accession>
<accession>P06217</accession>
<proteinExistence type="inferred from homology"/>
<comment type="function">
    <text evidence="1">This protein is one of the repressors that regulate the expression of deoCABD genes, which encode nucleotide and deoxy ribonucleotide catabolizing enzymes. It also negatively regulates the expression of nupG (a transport protein) and tsx (a pore-forming protein). The inducer is deoxyribose-5-phosphate (By similarity).</text>
</comment>
<comment type="subunit">
    <text evidence="1">Homooctamer.</text>
</comment>
<reference key="1">
    <citation type="journal article" date="2002" name="Proc. Natl. Acad. Sci. U.S.A.">
        <title>Extensive mosaic structure revealed by the complete genome sequence of uropathogenic Escherichia coli.</title>
        <authorList>
            <person name="Welch R.A."/>
            <person name="Burland V."/>
            <person name="Plunkett G. III"/>
            <person name="Redford P."/>
            <person name="Roesch P."/>
            <person name="Rasko D."/>
            <person name="Buckles E.L."/>
            <person name="Liou S.-R."/>
            <person name="Boutin A."/>
            <person name="Hackett J."/>
            <person name="Stroud D."/>
            <person name="Mayhew G.F."/>
            <person name="Rose D.J."/>
            <person name="Zhou S."/>
            <person name="Schwartz D.C."/>
            <person name="Perna N.T."/>
            <person name="Mobley H.L.T."/>
            <person name="Donnenberg M.S."/>
            <person name="Blattner F.R."/>
        </authorList>
    </citation>
    <scope>NUCLEOTIDE SEQUENCE [LARGE SCALE GENOMIC DNA]</scope>
    <source>
        <strain>CFT073 / ATCC 700928 / UPEC</strain>
    </source>
</reference>
<gene>
    <name type="primary">deoR</name>
    <name type="ordered locus">c0925</name>
</gene>
<name>DEOR_ECOL6</name>
<keyword id="KW-0238">DNA-binding</keyword>
<keyword id="KW-1185">Reference proteome</keyword>
<keyword id="KW-0678">Repressor</keyword>
<keyword id="KW-0804">Transcription</keyword>
<keyword id="KW-0805">Transcription regulation</keyword>